<proteinExistence type="evidence at protein level"/>
<feature type="chain" id="PRO_0000114983" description="Thiamine repressible genes regulatory protein thi1">
    <location>
        <begin position="1"/>
        <end position="775"/>
    </location>
</feature>
<feature type="DNA-binding region" description="Zn(2)-C6 fungal-type" evidence="1">
    <location>
        <begin position="39"/>
        <end position="65"/>
    </location>
</feature>
<feature type="region of interest" description="Disordered" evidence="2">
    <location>
        <begin position="676"/>
        <end position="695"/>
    </location>
</feature>
<feature type="region of interest" description="Disordered" evidence="2">
    <location>
        <begin position="754"/>
        <end position="775"/>
    </location>
</feature>
<feature type="modified residue" description="Phosphoserine" evidence="4">
    <location>
        <position position="208"/>
    </location>
</feature>
<feature type="sequence conflict" description="In Ref. 3; AAA19010." evidence="5" ref="3">
    <original>N</original>
    <variation>K</variation>
    <location>
        <position position="10"/>
    </location>
</feature>
<feature type="sequence conflict" description="In Ref. 3; AAA19010." evidence="5" ref="3">
    <original>SA</original>
    <variation>LR</variation>
    <location>
        <begin position="325"/>
        <end position="326"/>
    </location>
</feature>
<feature type="sequence conflict" description="In Ref. 3; AAA19010." evidence="5" ref="3">
    <original>S</original>
    <variation>C</variation>
    <location>
        <position position="684"/>
    </location>
</feature>
<keyword id="KW-0010">Activator</keyword>
<keyword id="KW-0238">DNA-binding</keyword>
<keyword id="KW-0479">Metal-binding</keyword>
<keyword id="KW-0539">Nucleus</keyword>
<keyword id="KW-0597">Phosphoprotein</keyword>
<keyword id="KW-1185">Reference proteome</keyword>
<keyword id="KW-0804">Transcription</keyword>
<keyword id="KW-0805">Transcription regulation</keyword>
<keyword id="KW-0862">Zinc</keyword>
<comment type="function">
    <text evidence="3">Transcription factor that activates the nmt1 promoter. Regulation of thiamine repressible genes. Positively regulates conjugation during meiosis.</text>
</comment>
<comment type="subcellular location">
    <subcellularLocation>
        <location evidence="5">Nucleus</location>
    </subcellularLocation>
</comment>
<protein>
    <recommendedName>
        <fullName>Thiamine repressible genes regulatory protein thi1</fullName>
    </recommendedName>
    <alternativeName>
        <fullName>Transcription factor ntf1</fullName>
    </alternativeName>
</protein>
<evidence type="ECO:0000255" key="1">
    <source>
        <dbReference type="PROSITE-ProRule" id="PRU00227"/>
    </source>
</evidence>
<evidence type="ECO:0000256" key="2">
    <source>
        <dbReference type="SAM" id="MobiDB-lite"/>
    </source>
</evidence>
<evidence type="ECO:0000269" key="3">
    <source>
    </source>
</evidence>
<evidence type="ECO:0000269" key="4">
    <source>
    </source>
</evidence>
<evidence type="ECO:0000305" key="5"/>
<sequence>MNEEIGFLKNQLFADVKDLERKKKRRVPPEQRRRVFRACKHCRQKKIKCNGGQPCISCKTLNIECVYAQKSQNKTLSREYLEELSERQLCLEYIFSRMCPNFNLETKNLISISKKLSENENLPVSKIAEVTNELDTLVRINDQLSRNHISGTTEEMQSSSSLIAGEVQPGISFRDQLKVGKLEDTLYLGPTTSEAFIERLQNELELESISEDDLYSKRLSPSVSYSEFDEQLLLHARSLIPSKAVVEFLINSFFINVQTNLFVYHPHFFKCRLEIFLAMENQIDAGFLCILLMVLAFGNQYTAEQQEDVSKSNFHASNIGNRLFSAALSIFPLVLLQSDVSAVQSSLLIGLYLQSTIYEKSSFAYFGLAIKFAVALGLHKNSDDPSLTQNSKELRNRLLWSVFCIDRFVSMTTGRRPSIPLECISIPYPVILPDLEIPGSQSIVENMRAVINLAKLTNEICDSLYWNPSPSFESQVNSVRRIYARLELWKSDLHSSVVFDESAVQHPLFRSNAHVQMIYDNAIMLTTRVIMVKKLKDKDLTAENRRYIQLCVESATRVINIAHLLLTHKCLSSLSFFGLHVPFASAPILLLSLHYENSQDIQAVVTKLWQVLEFLSSRCEFARESLNYLKSFNKQLSRRNAPDINNPIADFQNSFQNWQSWVGDMSHGDMLSTFKLTGESSNGSNSTPNEAFQPFDQTSSLYNVPGLNKSYVSNQPSLLTPETFLPDPVLNLEVDKQWTAPTFLSWTELLGPTNVSEQSSHTAEQTSNLTLEKNG</sequence>
<dbReference type="EMBL" id="X77512">
    <property type="protein sequence ID" value="CAA54648.1"/>
    <property type="molecule type" value="Genomic_DNA"/>
</dbReference>
<dbReference type="EMBL" id="CU329670">
    <property type="protein sequence ID" value="CAB62420.2"/>
    <property type="molecule type" value="Genomic_DNA"/>
</dbReference>
<dbReference type="EMBL" id="L25912">
    <property type="protein sequence ID" value="AAA19010.1"/>
    <property type="molecule type" value="Unassigned_DNA"/>
</dbReference>
<dbReference type="PIR" id="S41962">
    <property type="entry name" value="S41962"/>
</dbReference>
<dbReference type="RefSeq" id="NP_594098.2">
    <property type="nucleotide sequence ID" value="NM_001019522.2"/>
</dbReference>
<dbReference type="SMR" id="P36598"/>
<dbReference type="BioGRID" id="278078">
    <property type="interactions" value="5"/>
</dbReference>
<dbReference type="FunCoup" id="P36598">
    <property type="interactions" value="2"/>
</dbReference>
<dbReference type="STRING" id="284812.P36598"/>
<dbReference type="iPTMnet" id="P36598"/>
<dbReference type="PaxDb" id="4896-SPAC1486.10.1"/>
<dbReference type="EnsemblFungi" id="SPAC1486.10.1">
    <property type="protein sequence ID" value="SPAC1486.10.1:pep"/>
    <property type="gene ID" value="SPAC1486.10"/>
</dbReference>
<dbReference type="GeneID" id="2541581"/>
<dbReference type="KEGG" id="spo:2541581"/>
<dbReference type="PomBase" id="SPAC1486.10">
    <property type="gene designation" value="thi1"/>
</dbReference>
<dbReference type="VEuPathDB" id="FungiDB:SPAC1486.10"/>
<dbReference type="eggNOG" id="ENOG502RZ2S">
    <property type="taxonomic scope" value="Eukaryota"/>
</dbReference>
<dbReference type="HOGENOM" id="CLU_360982_0_0_1"/>
<dbReference type="InParanoid" id="P36598"/>
<dbReference type="OMA" id="FRACKHC"/>
<dbReference type="PhylomeDB" id="P36598"/>
<dbReference type="PRO" id="PR:P36598"/>
<dbReference type="Proteomes" id="UP000002485">
    <property type="component" value="Chromosome I"/>
</dbReference>
<dbReference type="GO" id="GO:0005634">
    <property type="term" value="C:nucleus"/>
    <property type="evidence" value="ECO:0000318"/>
    <property type="project" value="GO_Central"/>
</dbReference>
<dbReference type="GO" id="GO:0001228">
    <property type="term" value="F:DNA-binding transcription activator activity, RNA polymerase II-specific"/>
    <property type="evidence" value="ECO:0000315"/>
    <property type="project" value="PomBase"/>
</dbReference>
<dbReference type="GO" id="GO:0000981">
    <property type="term" value="F:DNA-binding transcription factor activity, RNA polymerase II-specific"/>
    <property type="evidence" value="ECO:0000318"/>
    <property type="project" value="GO_Central"/>
</dbReference>
<dbReference type="GO" id="GO:0000978">
    <property type="term" value="F:RNA polymerase II cis-regulatory region sequence-specific DNA binding"/>
    <property type="evidence" value="ECO:0000255"/>
    <property type="project" value="PomBase"/>
</dbReference>
<dbReference type="GO" id="GO:0043565">
    <property type="term" value="F:sequence-specific DNA binding"/>
    <property type="evidence" value="ECO:0000318"/>
    <property type="project" value="GO_Central"/>
</dbReference>
<dbReference type="GO" id="GO:0008270">
    <property type="term" value="F:zinc ion binding"/>
    <property type="evidence" value="ECO:0000255"/>
    <property type="project" value="PomBase"/>
</dbReference>
<dbReference type="GO" id="GO:0006351">
    <property type="term" value="P:DNA-templated transcription"/>
    <property type="evidence" value="ECO:0007669"/>
    <property type="project" value="InterPro"/>
</dbReference>
<dbReference type="GO" id="GO:0045893">
    <property type="term" value="P:positive regulation of DNA-templated transcription"/>
    <property type="evidence" value="ECO:0000314"/>
    <property type="project" value="UniProtKB"/>
</dbReference>
<dbReference type="GO" id="GO:0090180">
    <property type="term" value="P:positive regulation of thiamine biosynthetic process"/>
    <property type="evidence" value="ECO:0000315"/>
    <property type="project" value="PomBase"/>
</dbReference>
<dbReference type="GO" id="GO:0045944">
    <property type="term" value="P:positive regulation of transcription by RNA polymerase II"/>
    <property type="evidence" value="ECO:0000315"/>
    <property type="project" value="PomBase"/>
</dbReference>
<dbReference type="GO" id="GO:0006357">
    <property type="term" value="P:regulation of transcription by RNA polymerase II"/>
    <property type="evidence" value="ECO:0000315"/>
    <property type="project" value="PomBase"/>
</dbReference>
<dbReference type="GO" id="GO:0031047">
    <property type="term" value="P:regulatory ncRNA-mediated gene silencing"/>
    <property type="evidence" value="ECO:0000314"/>
    <property type="project" value="UniProtKB"/>
</dbReference>
<dbReference type="CDD" id="cd12148">
    <property type="entry name" value="fungal_TF_MHR"/>
    <property type="match status" value="1"/>
</dbReference>
<dbReference type="CDD" id="cd00067">
    <property type="entry name" value="GAL4"/>
    <property type="match status" value="1"/>
</dbReference>
<dbReference type="FunFam" id="4.10.240.10:FF:000028">
    <property type="entry name" value="Uncharacterized transcriptional regulatory protein C1773.12"/>
    <property type="match status" value="1"/>
</dbReference>
<dbReference type="Gene3D" id="4.10.240.10">
    <property type="entry name" value="Zn(2)-C6 fungal-type DNA-binding domain"/>
    <property type="match status" value="1"/>
</dbReference>
<dbReference type="InterPro" id="IPR051711">
    <property type="entry name" value="Stress_Response_Reg"/>
</dbReference>
<dbReference type="InterPro" id="IPR007219">
    <property type="entry name" value="Transcription_factor_dom_fun"/>
</dbReference>
<dbReference type="InterPro" id="IPR036864">
    <property type="entry name" value="Zn2-C6_fun-type_DNA-bd_sf"/>
</dbReference>
<dbReference type="InterPro" id="IPR001138">
    <property type="entry name" value="Zn2Cys6_DnaBD"/>
</dbReference>
<dbReference type="PANTHER" id="PTHR47540:SF1">
    <property type="entry name" value="ACTIVATOR OF STRESS GENES 1-RELATED"/>
    <property type="match status" value="1"/>
</dbReference>
<dbReference type="PANTHER" id="PTHR47540">
    <property type="entry name" value="THIAMINE REPRESSIBLE GENES REGULATORY PROTEIN THI5"/>
    <property type="match status" value="1"/>
</dbReference>
<dbReference type="Pfam" id="PF04082">
    <property type="entry name" value="Fungal_trans"/>
    <property type="match status" value="1"/>
</dbReference>
<dbReference type="Pfam" id="PF00172">
    <property type="entry name" value="Zn_clus"/>
    <property type="match status" value="1"/>
</dbReference>
<dbReference type="SMART" id="SM00906">
    <property type="entry name" value="Fungal_trans"/>
    <property type="match status" value="1"/>
</dbReference>
<dbReference type="SMART" id="SM00066">
    <property type="entry name" value="GAL4"/>
    <property type="match status" value="1"/>
</dbReference>
<dbReference type="SUPFAM" id="SSF57701">
    <property type="entry name" value="Zn2/Cys6 DNA-binding domain"/>
    <property type="match status" value="1"/>
</dbReference>
<dbReference type="PROSITE" id="PS00463">
    <property type="entry name" value="ZN2_CY6_FUNGAL_1"/>
    <property type="match status" value="1"/>
</dbReference>
<dbReference type="PROSITE" id="PS50048">
    <property type="entry name" value="ZN2_CY6_FUNGAL_2"/>
    <property type="match status" value="1"/>
</dbReference>
<gene>
    <name type="primary">thi1</name>
    <name type="synonym">ntf1</name>
    <name type="ORF">SPAC1486.10</name>
    <name type="ORF">SPAC6G10.01</name>
</gene>
<reference key="1">
    <citation type="journal article" date="1994" name="Gene">
        <title>Thiamine-repressible genes in Schizosaccharomyces pombe are regulated by a Cys6 zinc-finger motif-containing protein.</title>
        <authorList>
            <person name="Frankhauser H."/>
            <person name="Schweingruber M.E."/>
        </authorList>
    </citation>
    <scope>NUCLEOTIDE SEQUENCE [GENOMIC DNA]</scope>
    <source>
        <strain>972 / ATCC 24843</strain>
    </source>
</reference>
<reference key="2">
    <citation type="journal article" date="2002" name="Nature">
        <title>The genome sequence of Schizosaccharomyces pombe.</title>
        <authorList>
            <person name="Wood V."/>
            <person name="Gwilliam R."/>
            <person name="Rajandream M.A."/>
            <person name="Lyne M.H."/>
            <person name="Lyne R."/>
            <person name="Stewart A."/>
            <person name="Sgouros J.G."/>
            <person name="Peat N."/>
            <person name="Hayles J."/>
            <person name="Baker S.G."/>
            <person name="Basham D."/>
            <person name="Bowman S."/>
            <person name="Brooks K."/>
            <person name="Brown D."/>
            <person name="Brown S."/>
            <person name="Chillingworth T."/>
            <person name="Churcher C.M."/>
            <person name="Collins M."/>
            <person name="Connor R."/>
            <person name="Cronin A."/>
            <person name="Davis P."/>
            <person name="Feltwell T."/>
            <person name="Fraser A."/>
            <person name="Gentles S."/>
            <person name="Goble A."/>
            <person name="Hamlin N."/>
            <person name="Harris D.E."/>
            <person name="Hidalgo J."/>
            <person name="Hodgson G."/>
            <person name="Holroyd S."/>
            <person name="Hornsby T."/>
            <person name="Howarth S."/>
            <person name="Huckle E.J."/>
            <person name="Hunt S."/>
            <person name="Jagels K."/>
            <person name="James K.D."/>
            <person name="Jones L."/>
            <person name="Jones M."/>
            <person name="Leather S."/>
            <person name="McDonald S."/>
            <person name="McLean J."/>
            <person name="Mooney P."/>
            <person name="Moule S."/>
            <person name="Mungall K.L."/>
            <person name="Murphy L.D."/>
            <person name="Niblett D."/>
            <person name="Odell C."/>
            <person name="Oliver K."/>
            <person name="O'Neil S."/>
            <person name="Pearson D."/>
            <person name="Quail M.A."/>
            <person name="Rabbinowitsch E."/>
            <person name="Rutherford K.M."/>
            <person name="Rutter S."/>
            <person name="Saunders D."/>
            <person name="Seeger K."/>
            <person name="Sharp S."/>
            <person name="Skelton J."/>
            <person name="Simmonds M.N."/>
            <person name="Squares R."/>
            <person name="Squares S."/>
            <person name="Stevens K."/>
            <person name="Taylor K."/>
            <person name="Taylor R.G."/>
            <person name="Tivey A."/>
            <person name="Walsh S.V."/>
            <person name="Warren T."/>
            <person name="Whitehead S."/>
            <person name="Woodward J.R."/>
            <person name="Volckaert G."/>
            <person name="Aert R."/>
            <person name="Robben J."/>
            <person name="Grymonprez B."/>
            <person name="Weltjens I."/>
            <person name="Vanstreels E."/>
            <person name="Rieger M."/>
            <person name="Schaefer M."/>
            <person name="Mueller-Auer S."/>
            <person name="Gabel C."/>
            <person name="Fuchs M."/>
            <person name="Duesterhoeft A."/>
            <person name="Fritzc C."/>
            <person name="Holzer E."/>
            <person name="Moestl D."/>
            <person name="Hilbert H."/>
            <person name="Borzym K."/>
            <person name="Langer I."/>
            <person name="Beck A."/>
            <person name="Lehrach H."/>
            <person name="Reinhardt R."/>
            <person name="Pohl T.M."/>
            <person name="Eger P."/>
            <person name="Zimmermann W."/>
            <person name="Wedler H."/>
            <person name="Wambutt R."/>
            <person name="Purnelle B."/>
            <person name="Goffeau A."/>
            <person name="Cadieu E."/>
            <person name="Dreano S."/>
            <person name="Gloux S."/>
            <person name="Lelaure V."/>
            <person name="Mottier S."/>
            <person name="Galibert F."/>
            <person name="Aves S.J."/>
            <person name="Xiang Z."/>
            <person name="Hunt C."/>
            <person name="Moore K."/>
            <person name="Hurst S.M."/>
            <person name="Lucas M."/>
            <person name="Rochet M."/>
            <person name="Gaillardin C."/>
            <person name="Tallada V.A."/>
            <person name="Garzon A."/>
            <person name="Thode G."/>
            <person name="Daga R.R."/>
            <person name="Cruzado L."/>
            <person name="Jimenez J."/>
            <person name="Sanchez M."/>
            <person name="del Rey F."/>
            <person name="Benito J."/>
            <person name="Dominguez A."/>
            <person name="Revuelta J.L."/>
            <person name="Moreno S."/>
            <person name="Armstrong J."/>
            <person name="Forsburg S.L."/>
            <person name="Cerutti L."/>
            <person name="Lowe T."/>
            <person name="McCombie W.R."/>
            <person name="Paulsen I."/>
            <person name="Potashkin J."/>
            <person name="Shpakovski G.V."/>
            <person name="Ussery D."/>
            <person name="Barrell B.G."/>
            <person name="Nurse P."/>
        </authorList>
    </citation>
    <scope>NUCLEOTIDE SEQUENCE [LARGE SCALE GENOMIC DNA]</scope>
    <source>
        <strain>972 / ATCC 24843</strain>
    </source>
</reference>
<reference key="3">
    <citation type="journal article" date="1994" name="J. Biol. Chem.">
        <title>ntf1+ encodes a 6-cysteine zinc finger-containing transcription factor that regulates the nmt1 promoter in fission yeast.</title>
        <authorList>
            <person name="Tang C.S.L."/>
            <person name="Bueno A."/>
            <person name="Russell P."/>
        </authorList>
    </citation>
    <scope>NUCLEOTIDE SEQUENCE OF 1-728</scope>
    <source>
        <strain>972 / ATCC 24843</strain>
    </source>
</reference>
<reference key="4">
    <citation type="journal article" date="2006" name="Curr. Genet.">
        <title>Joint regulation of the nmt1 promoter and sporulation by Thi1 and Thi5 in Schizosaccharomyces pombe.</title>
        <authorList>
            <person name="McQuire T.A."/>
            <person name="Young P.G."/>
        </authorList>
    </citation>
    <scope>FUNCTION</scope>
</reference>
<reference key="5">
    <citation type="journal article" date="2008" name="J. Proteome Res.">
        <title>Phosphoproteome analysis of fission yeast.</title>
        <authorList>
            <person name="Wilson-Grady J.T."/>
            <person name="Villen J."/>
            <person name="Gygi S.P."/>
        </authorList>
    </citation>
    <scope>PHOSPHORYLATION [LARGE SCALE ANALYSIS] AT SER-208</scope>
    <scope>IDENTIFICATION BY MASS SPECTROMETRY</scope>
</reference>
<accession>P36598</accession>
<accession>P40378</accession>
<accession>Q9UTJ9</accession>
<organism>
    <name type="scientific">Schizosaccharomyces pombe (strain 972 / ATCC 24843)</name>
    <name type="common">Fission yeast</name>
    <dbReference type="NCBI Taxonomy" id="284812"/>
    <lineage>
        <taxon>Eukaryota</taxon>
        <taxon>Fungi</taxon>
        <taxon>Dikarya</taxon>
        <taxon>Ascomycota</taxon>
        <taxon>Taphrinomycotina</taxon>
        <taxon>Schizosaccharomycetes</taxon>
        <taxon>Schizosaccharomycetales</taxon>
        <taxon>Schizosaccharomycetaceae</taxon>
        <taxon>Schizosaccharomyces</taxon>
    </lineage>
</organism>
<name>THI1_SCHPO</name>